<evidence type="ECO:0000255" key="1">
    <source>
        <dbReference type="HAMAP-Rule" id="MF_00300"/>
    </source>
</evidence>
<feature type="chain" id="PRO_0000140632" description="Chorismate synthase">
    <location>
        <begin position="1"/>
        <end position="363"/>
    </location>
</feature>
<feature type="binding site" evidence="1">
    <location>
        <position position="48"/>
    </location>
    <ligand>
        <name>NADP(+)</name>
        <dbReference type="ChEBI" id="CHEBI:58349"/>
    </ligand>
</feature>
<feature type="binding site" evidence="1">
    <location>
        <position position="54"/>
    </location>
    <ligand>
        <name>NADP(+)</name>
        <dbReference type="ChEBI" id="CHEBI:58349"/>
    </ligand>
</feature>
<feature type="binding site" evidence="1">
    <location>
        <begin position="125"/>
        <end position="127"/>
    </location>
    <ligand>
        <name>FMN</name>
        <dbReference type="ChEBI" id="CHEBI:58210"/>
    </ligand>
</feature>
<feature type="binding site" evidence="1">
    <location>
        <begin position="237"/>
        <end position="238"/>
    </location>
    <ligand>
        <name>FMN</name>
        <dbReference type="ChEBI" id="CHEBI:58210"/>
    </ligand>
</feature>
<feature type="binding site" evidence="1">
    <location>
        <position position="277"/>
    </location>
    <ligand>
        <name>FMN</name>
        <dbReference type="ChEBI" id="CHEBI:58210"/>
    </ligand>
</feature>
<feature type="binding site" evidence="1">
    <location>
        <begin position="292"/>
        <end position="296"/>
    </location>
    <ligand>
        <name>FMN</name>
        <dbReference type="ChEBI" id="CHEBI:58210"/>
    </ligand>
</feature>
<feature type="binding site" evidence="1">
    <location>
        <position position="318"/>
    </location>
    <ligand>
        <name>FMN</name>
        <dbReference type="ChEBI" id="CHEBI:58210"/>
    </ligand>
</feature>
<gene>
    <name evidence="1" type="primary">aroC</name>
    <name type="ordered locus">PP_1830</name>
</gene>
<reference key="1">
    <citation type="journal article" date="2002" name="Environ. Microbiol.">
        <title>Complete genome sequence and comparative analysis of the metabolically versatile Pseudomonas putida KT2440.</title>
        <authorList>
            <person name="Nelson K.E."/>
            <person name="Weinel C."/>
            <person name="Paulsen I.T."/>
            <person name="Dodson R.J."/>
            <person name="Hilbert H."/>
            <person name="Martins dos Santos V.A.P."/>
            <person name="Fouts D.E."/>
            <person name="Gill S.R."/>
            <person name="Pop M."/>
            <person name="Holmes M."/>
            <person name="Brinkac L.M."/>
            <person name="Beanan M.J."/>
            <person name="DeBoy R.T."/>
            <person name="Daugherty S.C."/>
            <person name="Kolonay J.F."/>
            <person name="Madupu R."/>
            <person name="Nelson W.C."/>
            <person name="White O."/>
            <person name="Peterson J.D."/>
            <person name="Khouri H.M."/>
            <person name="Hance I."/>
            <person name="Chris Lee P."/>
            <person name="Holtzapple E.K."/>
            <person name="Scanlan D."/>
            <person name="Tran K."/>
            <person name="Moazzez A."/>
            <person name="Utterback T.R."/>
            <person name="Rizzo M."/>
            <person name="Lee K."/>
            <person name="Kosack D."/>
            <person name="Moestl D."/>
            <person name="Wedler H."/>
            <person name="Lauber J."/>
            <person name="Stjepandic D."/>
            <person name="Hoheisel J."/>
            <person name="Straetz M."/>
            <person name="Heim S."/>
            <person name="Kiewitz C."/>
            <person name="Eisen J.A."/>
            <person name="Timmis K.N."/>
            <person name="Duesterhoeft A."/>
            <person name="Tuemmler B."/>
            <person name="Fraser C.M."/>
        </authorList>
    </citation>
    <scope>NUCLEOTIDE SEQUENCE [LARGE SCALE GENOMIC DNA]</scope>
    <source>
        <strain>ATCC 47054 / DSM 6125 / CFBP 8728 / NCIMB 11950 / KT2440</strain>
    </source>
</reference>
<dbReference type="EC" id="4.2.3.5" evidence="1"/>
<dbReference type="EMBL" id="AE015451">
    <property type="protein sequence ID" value="AAN67449.1"/>
    <property type="molecule type" value="Genomic_DNA"/>
</dbReference>
<dbReference type="RefSeq" id="NP_743985.1">
    <property type="nucleotide sequence ID" value="NC_002947.4"/>
</dbReference>
<dbReference type="RefSeq" id="WP_003252803.1">
    <property type="nucleotide sequence ID" value="NZ_CP169744.1"/>
</dbReference>
<dbReference type="SMR" id="Q88LU7"/>
<dbReference type="STRING" id="160488.PP_1830"/>
<dbReference type="PaxDb" id="160488-PP_1830"/>
<dbReference type="GeneID" id="83681633"/>
<dbReference type="KEGG" id="ppu:PP_1830"/>
<dbReference type="PATRIC" id="fig|160488.4.peg.1930"/>
<dbReference type="eggNOG" id="COG0082">
    <property type="taxonomic scope" value="Bacteria"/>
</dbReference>
<dbReference type="HOGENOM" id="CLU_034547_0_2_6"/>
<dbReference type="OrthoDB" id="9771806at2"/>
<dbReference type="PhylomeDB" id="Q88LU7"/>
<dbReference type="BioCyc" id="PPUT160488:G1G01-1935-MONOMER"/>
<dbReference type="UniPathway" id="UPA00053">
    <property type="reaction ID" value="UER00090"/>
</dbReference>
<dbReference type="Proteomes" id="UP000000556">
    <property type="component" value="Chromosome"/>
</dbReference>
<dbReference type="GO" id="GO:0005829">
    <property type="term" value="C:cytosol"/>
    <property type="evidence" value="ECO:0007669"/>
    <property type="project" value="TreeGrafter"/>
</dbReference>
<dbReference type="GO" id="GO:0004107">
    <property type="term" value="F:chorismate synthase activity"/>
    <property type="evidence" value="ECO:0007669"/>
    <property type="project" value="UniProtKB-UniRule"/>
</dbReference>
<dbReference type="GO" id="GO:0010181">
    <property type="term" value="F:FMN binding"/>
    <property type="evidence" value="ECO:0007669"/>
    <property type="project" value="TreeGrafter"/>
</dbReference>
<dbReference type="GO" id="GO:0008652">
    <property type="term" value="P:amino acid biosynthetic process"/>
    <property type="evidence" value="ECO:0007669"/>
    <property type="project" value="UniProtKB-KW"/>
</dbReference>
<dbReference type="GO" id="GO:0009073">
    <property type="term" value="P:aromatic amino acid family biosynthetic process"/>
    <property type="evidence" value="ECO:0007669"/>
    <property type="project" value="UniProtKB-KW"/>
</dbReference>
<dbReference type="GO" id="GO:0009423">
    <property type="term" value="P:chorismate biosynthetic process"/>
    <property type="evidence" value="ECO:0007669"/>
    <property type="project" value="UniProtKB-UniRule"/>
</dbReference>
<dbReference type="CDD" id="cd07304">
    <property type="entry name" value="Chorismate_synthase"/>
    <property type="match status" value="1"/>
</dbReference>
<dbReference type="FunFam" id="3.60.150.10:FF:000001">
    <property type="entry name" value="Chorismate synthase"/>
    <property type="match status" value="1"/>
</dbReference>
<dbReference type="Gene3D" id="3.60.150.10">
    <property type="entry name" value="Chorismate synthase AroC"/>
    <property type="match status" value="1"/>
</dbReference>
<dbReference type="HAMAP" id="MF_00300">
    <property type="entry name" value="Chorismate_synth"/>
    <property type="match status" value="1"/>
</dbReference>
<dbReference type="InterPro" id="IPR000453">
    <property type="entry name" value="Chorismate_synth"/>
</dbReference>
<dbReference type="InterPro" id="IPR035904">
    <property type="entry name" value="Chorismate_synth_AroC_sf"/>
</dbReference>
<dbReference type="InterPro" id="IPR020541">
    <property type="entry name" value="Chorismate_synthase_CS"/>
</dbReference>
<dbReference type="NCBIfam" id="TIGR00033">
    <property type="entry name" value="aroC"/>
    <property type="match status" value="1"/>
</dbReference>
<dbReference type="NCBIfam" id="NF003793">
    <property type="entry name" value="PRK05382.1"/>
    <property type="match status" value="1"/>
</dbReference>
<dbReference type="PANTHER" id="PTHR21085">
    <property type="entry name" value="CHORISMATE SYNTHASE"/>
    <property type="match status" value="1"/>
</dbReference>
<dbReference type="PANTHER" id="PTHR21085:SF0">
    <property type="entry name" value="CHORISMATE SYNTHASE"/>
    <property type="match status" value="1"/>
</dbReference>
<dbReference type="Pfam" id="PF01264">
    <property type="entry name" value="Chorismate_synt"/>
    <property type="match status" value="1"/>
</dbReference>
<dbReference type="PIRSF" id="PIRSF001456">
    <property type="entry name" value="Chorismate_synth"/>
    <property type="match status" value="1"/>
</dbReference>
<dbReference type="SUPFAM" id="SSF103263">
    <property type="entry name" value="Chorismate synthase, AroC"/>
    <property type="match status" value="1"/>
</dbReference>
<dbReference type="PROSITE" id="PS00787">
    <property type="entry name" value="CHORISMATE_SYNTHASE_1"/>
    <property type="match status" value="1"/>
</dbReference>
<dbReference type="PROSITE" id="PS00788">
    <property type="entry name" value="CHORISMATE_SYNTHASE_2"/>
    <property type="match status" value="1"/>
</dbReference>
<dbReference type="PROSITE" id="PS00789">
    <property type="entry name" value="CHORISMATE_SYNTHASE_3"/>
    <property type="match status" value="1"/>
</dbReference>
<sequence>MSGNTYGKLFTVTTAGESHGPALVAIVDGCPPGLEISLADLQHDLDRRKPGTSRHTTQRQEADEVEILSGVFEGRTTGCSIGLLIRNTDQKSKDYSAIKDLFRPAHADYTYHHKYGIRDYRGGGRSSARETAMRVAAGAIAKKFLATQGITVRGYMSQLGPIEIPFKTWESVEQNAFFSPDPDKVPELEAYMDQLRRDQDSVGAKITVVAEGVMPGLGEPIFDRLDAELAHALMSINAVKGVEIGAGFASVAQRGTEHRDELTPEGFLSNNAGGILGGISSGQPIVAHLALKPTSSITTPGRSIDVDGNPVDVITKGRHDPCVGIRATPIAEAMMAIALMDHLLRHRAQNADVQVNTPVLGQR</sequence>
<organism>
    <name type="scientific">Pseudomonas putida (strain ATCC 47054 / DSM 6125 / CFBP 8728 / NCIMB 11950 / KT2440)</name>
    <dbReference type="NCBI Taxonomy" id="160488"/>
    <lineage>
        <taxon>Bacteria</taxon>
        <taxon>Pseudomonadati</taxon>
        <taxon>Pseudomonadota</taxon>
        <taxon>Gammaproteobacteria</taxon>
        <taxon>Pseudomonadales</taxon>
        <taxon>Pseudomonadaceae</taxon>
        <taxon>Pseudomonas</taxon>
    </lineage>
</organism>
<protein>
    <recommendedName>
        <fullName evidence="1">Chorismate synthase</fullName>
        <shortName evidence="1">CS</shortName>
        <ecNumber evidence="1">4.2.3.5</ecNumber>
    </recommendedName>
    <alternativeName>
        <fullName evidence="1">5-enolpyruvylshikimate-3-phosphate phospholyase</fullName>
    </alternativeName>
</protein>
<name>AROC_PSEPK</name>
<proteinExistence type="inferred from homology"/>
<accession>Q88LU7</accession>
<keyword id="KW-0028">Amino-acid biosynthesis</keyword>
<keyword id="KW-0057">Aromatic amino acid biosynthesis</keyword>
<keyword id="KW-0274">FAD</keyword>
<keyword id="KW-0285">Flavoprotein</keyword>
<keyword id="KW-0288">FMN</keyword>
<keyword id="KW-0456">Lyase</keyword>
<keyword id="KW-0521">NADP</keyword>
<keyword id="KW-1185">Reference proteome</keyword>
<comment type="function">
    <text evidence="1">Catalyzes the anti-1,4-elimination of the C-3 phosphate and the C-6 proR hydrogen from 5-enolpyruvylshikimate-3-phosphate (EPSP) to yield chorismate, which is the branch point compound that serves as the starting substrate for the three terminal pathways of aromatic amino acid biosynthesis. This reaction introduces a second double bond into the aromatic ring system.</text>
</comment>
<comment type="catalytic activity">
    <reaction evidence="1">
        <text>5-O-(1-carboxyvinyl)-3-phosphoshikimate = chorismate + phosphate</text>
        <dbReference type="Rhea" id="RHEA:21020"/>
        <dbReference type="ChEBI" id="CHEBI:29748"/>
        <dbReference type="ChEBI" id="CHEBI:43474"/>
        <dbReference type="ChEBI" id="CHEBI:57701"/>
        <dbReference type="EC" id="4.2.3.5"/>
    </reaction>
</comment>
<comment type="cofactor">
    <cofactor evidence="1">
        <name>FMNH2</name>
        <dbReference type="ChEBI" id="CHEBI:57618"/>
    </cofactor>
    <text evidence="1">Reduced FMN (FMNH(2)).</text>
</comment>
<comment type="pathway">
    <text evidence="1">Metabolic intermediate biosynthesis; chorismate biosynthesis; chorismate from D-erythrose 4-phosphate and phosphoenolpyruvate: step 7/7.</text>
</comment>
<comment type="subunit">
    <text evidence="1">Homotetramer.</text>
</comment>
<comment type="similarity">
    <text evidence="1">Belongs to the chorismate synthase family.</text>
</comment>